<organism>
    <name type="scientific">Psychromonas ingrahamii (strain DSM 17664 / CCUG 51855 / 37)</name>
    <dbReference type="NCBI Taxonomy" id="357804"/>
    <lineage>
        <taxon>Bacteria</taxon>
        <taxon>Pseudomonadati</taxon>
        <taxon>Pseudomonadota</taxon>
        <taxon>Gammaproteobacteria</taxon>
        <taxon>Alteromonadales</taxon>
        <taxon>Psychromonadaceae</taxon>
        <taxon>Psychromonas</taxon>
    </lineage>
</organism>
<evidence type="ECO:0000255" key="1">
    <source>
        <dbReference type="HAMAP-Rule" id="MF_00599"/>
    </source>
</evidence>
<protein>
    <recommendedName>
        <fullName evidence="1">Cell division protein FtsB</fullName>
    </recommendedName>
</protein>
<dbReference type="EMBL" id="CP000510">
    <property type="protein sequence ID" value="ABM02524.1"/>
    <property type="molecule type" value="Genomic_DNA"/>
</dbReference>
<dbReference type="RefSeq" id="WP_011769083.1">
    <property type="nucleotide sequence ID" value="NC_008709.1"/>
</dbReference>
<dbReference type="SMR" id="A1SSQ9"/>
<dbReference type="STRING" id="357804.Ping_0671"/>
<dbReference type="KEGG" id="pin:Ping_0671"/>
<dbReference type="eggNOG" id="COG2919">
    <property type="taxonomic scope" value="Bacteria"/>
</dbReference>
<dbReference type="HOGENOM" id="CLU_134863_5_2_6"/>
<dbReference type="OrthoDB" id="7061211at2"/>
<dbReference type="Proteomes" id="UP000000639">
    <property type="component" value="Chromosome"/>
</dbReference>
<dbReference type="GO" id="GO:0032153">
    <property type="term" value="C:cell division site"/>
    <property type="evidence" value="ECO:0007669"/>
    <property type="project" value="UniProtKB-UniRule"/>
</dbReference>
<dbReference type="GO" id="GO:0030428">
    <property type="term" value="C:cell septum"/>
    <property type="evidence" value="ECO:0007669"/>
    <property type="project" value="TreeGrafter"/>
</dbReference>
<dbReference type="GO" id="GO:0005886">
    <property type="term" value="C:plasma membrane"/>
    <property type="evidence" value="ECO:0007669"/>
    <property type="project" value="UniProtKB-SubCell"/>
</dbReference>
<dbReference type="GO" id="GO:0043093">
    <property type="term" value="P:FtsZ-dependent cytokinesis"/>
    <property type="evidence" value="ECO:0007669"/>
    <property type="project" value="UniProtKB-UniRule"/>
</dbReference>
<dbReference type="HAMAP" id="MF_00599">
    <property type="entry name" value="FtsB"/>
    <property type="match status" value="1"/>
</dbReference>
<dbReference type="InterPro" id="IPR023081">
    <property type="entry name" value="Cell_div_FtsB"/>
</dbReference>
<dbReference type="InterPro" id="IPR007060">
    <property type="entry name" value="FtsL/DivIC"/>
</dbReference>
<dbReference type="NCBIfam" id="NF002058">
    <property type="entry name" value="PRK00888.1"/>
    <property type="match status" value="1"/>
</dbReference>
<dbReference type="PANTHER" id="PTHR37485">
    <property type="entry name" value="CELL DIVISION PROTEIN FTSB"/>
    <property type="match status" value="1"/>
</dbReference>
<dbReference type="PANTHER" id="PTHR37485:SF1">
    <property type="entry name" value="CELL DIVISION PROTEIN FTSB"/>
    <property type="match status" value="1"/>
</dbReference>
<dbReference type="Pfam" id="PF04977">
    <property type="entry name" value="DivIC"/>
    <property type="match status" value="1"/>
</dbReference>
<proteinExistence type="inferred from homology"/>
<accession>A1SSQ9</accession>
<feature type="chain" id="PRO_1000025715" description="Cell division protein FtsB">
    <location>
        <begin position="1"/>
        <end position="92"/>
    </location>
</feature>
<feature type="topological domain" description="Cytoplasmic" evidence="1">
    <location>
        <begin position="1"/>
        <end position="3"/>
    </location>
</feature>
<feature type="transmembrane region" description="Helical" evidence="1">
    <location>
        <begin position="4"/>
        <end position="21"/>
    </location>
</feature>
<feature type="topological domain" description="Periplasmic" evidence="1">
    <location>
        <begin position="22"/>
        <end position="92"/>
    </location>
</feature>
<feature type="coiled-coil region" evidence="1">
    <location>
        <begin position="28"/>
        <end position="62"/>
    </location>
</feature>
<keyword id="KW-0131">Cell cycle</keyword>
<keyword id="KW-0132">Cell division</keyword>
<keyword id="KW-0997">Cell inner membrane</keyword>
<keyword id="KW-1003">Cell membrane</keyword>
<keyword id="KW-0175">Coiled coil</keyword>
<keyword id="KW-0472">Membrane</keyword>
<keyword id="KW-1185">Reference proteome</keyword>
<keyword id="KW-0812">Transmembrane</keyword>
<keyword id="KW-1133">Transmembrane helix</keyword>
<sequence length="92" mass="10946">MRLFVFFMLCLLVLLQYHLWFGKNGLGDRHNLQEEVTLILENNSELRQRNQMMFSEIKDLKEGTDAIEERARNELGLVKEGETFFRIVPKED</sequence>
<gene>
    <name evidence="1" type="primary">ftsB</name>
    <name type="ordered locus">Ping_0671</name>
</gene>
<comment type="function">
    <text evidence="1">Essential cell division protein. May link together the upstream cell division proteins, which are predominantly cytoplasmic, with the downstream cell division proteins, which are predominantly periplasmic.</text>
</comment>
<comment type="subunit">
    <text evidence="1">Part of a complex composed of FtsB, FtsL and FtsQ.</text>
</comment>
<comment type="subcellular location">
    <subcellularLocation>
        <location evidence="1">Cell inner membrane</location>
        <topology evidence="1">Single-pass type II membrane protein</topology>
    </subcellularLocation>
    <text evidence="1">Localizes to the division septum.</text>
</comment>
<comment type="similarity">
    <text evidence="1">Belongs to the FtsB family.</text>
</comment>
<name>FTSB_PSYIN</name>
<reference key="1">
    <citation type="journal article" date="2008" name="BMC Genomics">
        <title>Genomics of an extreme psychrophile, Psychromonas ingrahamii.</title>
        <authorList>
            <person name="Riley M."/>
            <person name="Staley J.T."/>
            <person name="Danchin A."/>
            <person name="Wang T.Z."/>
            <person name="Brettin T.S."/>
            <person name="Hauser L.J."/>
            <person name="Land M.L."/>
            <person name="Thompson L.S."/>
        </authorList>
    </citation>
    <scope>NUCLEOTIDE SEQUENCE [LARGE SCALE GENOMIC DNA]</scope>
    <source>
        <strain>DSM 17664 / CCUG 51855 / 37</strain>
    </source>
</reference>